<reference key="1">
    <citation type="journal article" date="1983" name="Proc. Natl. Acad. Sci. U.S.A.">
        <title>Human adult T-cell leukemia virus: complete nucleotide sequence of the provirus genome integrated in leukemia cell DNA.</title>
        <authorList>
            <person name="Seiki M."/>
            <person name="Hattori S."/>
            <person name="Hirayama Y."/>
            <person name="Yoshida M.C."/>
        </authorList>
    </citation>
    <scope>NUCLEOTIDE SEQUENCE [GENOMIC DNA]</scope>
</reference>
<reference key="2">
    <citation type="journal article" date="1986" name="Biochem. Biophys. Res. Commun.">
        <title>Identification of a protease gene of human T-cell leukemia virus type I (HTLV-I) and its structural comparison.</title>
        <authorList>
            <person name="Nam S.H."/>
            <person name="Hatanaka M."/>
        </authorList>
    </citation>
    <scope>NUCLEOTIDE SEQUENCE [GENOMIC RNA] OF 395-651</scope>
</reference>
<reference key="3">
    <citation type="journal article" date="1982" name="Proc. Natl. Acad. Sci. U.S.A.">
        <title>Primary structure analysis of the major internal protein p24 of human type C T-cell leukemia virus.</title>
        <authorList>
            <person name="Oroszlan S."/>
            <person name="Sarngadharan M.G."/>
            <person name="Copeland T.D."/>
            <person name="Kalyanaraman V.S."/>
            <person name="Gilden R.V."/>
            <person name="Gallo R.C."/>
        </authorList>
    </citation>
    <scope>PROTEIN SEQUENCE OF 131-155</scope>
</reference>
<reference key="4">
    <citation type="journal article" date="1993" name="J. Virol.">
        <title>Characterization of ribosomal frameshifting for expression of pol gene products of human T-cell leukemia virus type I.</title>
        <authorList>
            <person name="Nam S.H."/>
            <person name="Copeland T.D."/>
            <person name="Hatanaka M."/>
            <person name="Oroszlan S."/>
        </authorList>
    </citation>
    <scope>RIBOSOMAL FRAMESHIFT</scope>
</reference>
<reference key="5">
    <citation type="journal article" date="1999" name="J. Biol. Chem.">
        <title>Stabilization from autoproteolysis and kinetic characterization of the human T-cell leukemia virus type 1 proteinase.</title>
        <authorList>
            <person name="Louis J.M."/>
            <person name="Oroszlan S."/>
            <person name="Toezser J."/>
        </authorList>
    </citation>
    <scope>CHARACTERIZATION (PROTEASE)</scope>
    <scope>PROTEOLYTIC CLEAVAGE (GAG-PRO POLYPROTEIN)</scope>
</reference>
<reference key="6">
    <citation type="journal article" date="2001" name="J. Virol.">
        <title>The NH2-terminal domain of the human T-cell leukemia virus type 1 capsid protein is involved in particle formation.</title>
        <authorList>
            <person name="Rayne F."/>
            <person name="Bouamr F."/>
            <person name="Lalanne J."/>
            <person name="Mamoun R.Z."/>
        </authorList>
    </citation>
    <scope>DOMAIN (CAPSID PROTEIN P24)</scope>
    <scope>MUTAGENESIS OF GLY-2</scope>
    <scope>MYRISTOYLATION AT GLY-2</scope>
</reference>
<reference key="7">
    <citation type="journal article" date="2002" name="J. Virol.">
        <title>A novel protease processing site in the transframe protein of human T-cell leukemia virus type 1 PR76(gag-pro) defines the N terminus of RT.</title>
        <authorList>
            <person name="Heidecker G."/>
            <person name="Hill S."/>
            <person name="Lloyd P.A."/>
            <person name="Derse D."/>
        </authorList>
    </citation>
    <scope>PROTEOLYTIC CLEAVAGE (GAG-PRO POLYPROTEIN)</scope>
    <scope>MUTAGENESIS OF 573-ILE--PRO-575 AND 581-VAL--LEU-584</scope>
</reference>
<reference key="8">
    <citation type="journal article" date="2003" name="Chem. Biol.">
        <title>Understanding HTLV-I protease.</title>
        <authorList>
            <person name="Shuker S.B."/>
            <person name="Mariani V.L."/>
            <person name="Herger B.E."/>
            <person name="Dennison K.J."/>
        </authorList>
    </citation>
    <scope>REVIEW</scope>
</reference>
<reference key="9">
    <citation type="journal article" date="2003" name="J. Virol.">
        <title>The eukaryotic translation initiation factor 4GI is cleaved by different retroviral proteases.</title>
        <authorList>
            <person name="Alvarez E."/>
            <person name="Menendez-Arias L."/>
            <person name="Carrasco L."/>
        </authorList>
    </citation>
    <scope>FUNCTION (PROTEASE)</scope>
</reference>
<reference key="10">
    <citation type="journal article" date="2004" name="J. Biol. Chem.">
        <title>Narrow substrate specificity and sensitivity toward ligand-binding site mutations of human T-cell Leukemia virus type 1 protease.</title>
        <authorList>
            <person name="Kadas J."/>
            <person name="Weber I.T."/>
            <person name="Bagossi P."/>
            <person name="Miklossy G."/>
            <person name="Boross P."/>
            <person name="Oroszlan S."/>
            <person name="Toezser J."/>
        </authorList>
    </citation>
    <scope>FUNCTION (PROTEASE)</scope>
    <scope>CATALYTIC ACTIVITY (PROTEASE)</scope>
    <scope>MUTAGENESIS OF MET-486; LEU-506; ALA-508; PHE-516; ASN-545; ASN-546 AND TRP-547</scope>
    <scope>PROTEOLYTIC CLEAVAGE (GAG-PRO POLYPROTEIN)</scope>
</reference>
<reference key="11">
    <citation type="journal article" date="2006" name="Bioorg. Med. Chem. Lett.">
        <title>Evaluations of substrate specificity and inhibition at PR/p3 cleavage site of HTLV-1 protease.</title>
        <authorList>
            <person name="Naka H."/>
            <person name="Teruya K."/>
            <person name="Bang J.K."/>
            <person name="Aimoto S."/>
            <person name="Tatsumi T."/>
            <person name="Konno H."/>
            <person name="Nosaka K."/>
            <person name="Akaji K."/>
        </authorList>
    </citation>
    <scope>PROTEOLYTIC CLEAVAGE (GAG-PRO POLYPROTEIN)</scope>
</reference>
<reference key="12">
    <citation type="journal article" date="2015" name="Biochem. Biophys. Res. Commun.">
        <title>Bovine leukemia virus nucleocapsid protein is an efficient nucleic acid chaperone.</title>
        <authorList>
            <person name="Qualley D.F."/>
            <person name="Sokolove V.L."/>
            <person name="Ross J.L."/>
        </authorList>
    </citation>
    <scope>FUNCTION (NUCLEOCAPSID PROTEIN P15-PRO)</scope>
</reference>
<reference key="13">
    <citation type="journal article" date="1999" name="J. Biomol. NMR">
        <title>Sequence-specific 1H, 13C and 15N chemical shift assignment and secondary structure of the HTLV-I capsid protein.</title>
        <authorList>
            <person name="Khorasanizadeh S."/>
            <person name="Campos-Olivas R."/>
            <person name="Clark C.A."/>
            <person name="Summers M.F."/>
        </authorList>
    </citation>
    <scope>STRUCTURE BY NMR OF 146-344</scope>
</reference>
<organism>
    <name type="scientific">Human T-cell leukemia virus 1 (strain Japan ATK-1 subtype A)</name>
    <name type="common">HTLV-1</name>
    <dbReference type="NCBI Taxonomy" id="11926"/>
    <lineage>
        <taxon>Viruses</taxon>
        <taxon>Riboviria</taxon>
        <taxon>Pararnavirae</taxon>
        <taxon>Artverviricota</taxon>
        <taxon>Revtraviricetes</taxon>
        <taxon>Ortervirales</taxon>
        <taxon>Retroviridae</taxon>
        <taxon>Orthoretrovirinae</taxon>
        <taxon>Deltaretrovirus</taxon>
        <taxon>Primate T-lymphotropic virus 1</taxon>
    </lineage>
</organism>
<organismHost>
    <name type="scientific">Homo sapiens</name>
    <name type="common">Human</name>
    <dbReference type="NCBI Taxonomy" id="9606"/>
</organismHost>
<sequence length="651" mass="71558">MGQIFSRSASPIPRPPRGLAAHHWLNFLQAAYRLEPGPSSYDFHQLKKFLKIALETPARICPINYSLLASLLPKGYPGRVNEILHILIQTQAQIPSRPAPPPPSSPTHDPPDSDPQIPPPYVEPTAPQVLPVMHPHGAPPNHRPWQMKDLQAIKQEVSQAAPGSPQFMQTIRLAVQQFDPTAKDLQDLLQYLCSSLVASLHHQQLDSLISEAETRGITGYNPLAGPLRVQANNPQQQGLRREYQQLWLAAFAALPGSAKDPSWASILQGLEEPYHAFVERLNIALDNGLPEGTPKDPILRSLAYSNANKECQKLLQARGHTNSPLGDMLRACQTWTPKDKTKVLVVQPKKPPPNQPCFRCGKAGHWSRDCTQPRPPPGPCPLCQDPTHWKRDCPRLKPTIPEPEPEEDALLLDLPADIPHPKNLHRGGGLTSPPTLQQVLPNQDPASILPVIPLDPARRPVIKAQVDTQTSHPKTIEALLDTGADMTVLPIALFSSNTPLKNTSVLGAGGQTQDHFKLTSLPVLIRLPFRTTPIVLTSCLVDTKNNWAIIGRDALQQCQGVLYLPEAKRPPVILPIQAPAVLGLEHLPRPPEISQFPLNQNASRPCNTWSGRPWRQAISNPTPGQGITQYSQLKRPMEPGDSSTTCGPLTL</sequence>
<gene>
    <name type="primary">gag-pro</name>
    <name type="synonym">prt</name>
</gene>
<dbReference type="EC" id="3.4.23.-" evidence="4 10"/>
<dbReference type="EMBL" id="J02029">
    <property type="status" value="NOT_ANNOTATED_CDS"/>
    <property type="molecule type" value="Genomic_DNA"/>
</dbReference>
<dbReference type="EMBL" id="M13810">
    <property type="protein sequence ID" value="AAA46206.1"/>
    <property type="status" value="ALT_SEQ"/>
    <property type="molecule type" value="Genomic_RNA"/>
</dbReference>
<dbReference type="PIR" id="A24817">
    <property type="entry name" value="PNLJH1"/>
</dbReference>
<dbReference type="PDB" id="6W6Q">
    <property type="method" value="X-ray"/>
    <property type="resolution" value="2.10 A"/>
    <property type="chains" value="A/B=450-565"/>
</dbReference>
<dbReference type="PDB" id="6W6R">
    <property type="method" value="X-ray"/>
    <property type="resolution" value="2.05 A"/>
    <property type="chains" value="A/B=450-565"/>
</dbReference>
<dbReference type="PDB" id="6W6S">
    <property type="method" value="X-ray"/>
    <property type="resolution" value="2.29 A"/>
    <property type="chains" value="A/B=450-565"/>
</dbReference>
<dbReference type="PDBsum" id="6W6Q"/>
<dbReference type="PDBsum" id="6W6R"/>
<dbReference type="PDBsum" id="6W6S"/>
<dbReference type="BMRB" id="P10274"/>
<dbReference type="SMR" id="P10274"/>
<dbReference type="BindingDB" id="P10274"/>
<dbReference type="ChEMBL" id="CHEMBL3346"/>
<dbReference type="MEROPS" id="A02.012"/>
<dbReference type="iPTMnet" id="P10274"/>
<dbReference type="Proteomes" id="UP000007683">
    <property type="component" value="Segment"/>
</dbReference>
<dbReference type="GO" id="GO:0019013">
    <property type="term" value="C:viral nucleocapsid"/>
    <property type="evidence" value="ECO:0007669"/>
    <property type="project" value="UniProtKB-KW"/>
</dbReference>
<dbReference type="GO" id="GO:0004190">
    <property type="term" value="F:aspartic-type endopeptidase activity"/>
    <property type="evidence" value="ECO:0007669"/>
    <property type="project" value="UniProtKB-KW"/>
</dbReference>
<dbReference type="GO" id="GO:0003676">
    <property type="term" value="F:nucleic acid binding"/>
    <property type="evidence" value="ECO:0007669"/>
    <property type="project" value="InterPro"/>
</dbReference>
<dbReference type="GO" id="GO:0005198">
    <property type="term" value="F:structural molecule activity"/>
    <property type="evidence" value="ECO:0007669"/>
    <property type="project" value="InterPro"/>
</dbReference>
<dbReference type="GO" id="GO:0008270">
    <property type="term" value="F:zinc ion binding"/>
    <property type="evidence" value="ECO:0007669"/>
    <property type="project" value="UniProtKB-KW"/>
</dbReference>
<dbReference type="GO" id="GO:0006508">
    <property type="term" value="P:proteolysis"/>
    <property type="evidence" value="ECO:0007669"/>
    <property type="project" value="UniProtKB-KW"/>
</dbReference>
<dbReference type="GO" id="GO:0039657">
    <property type="term" value="P:symbiont-mediated suppression of host gene expression"/>
    <property type="evidence" value="ECO:0007669"/>
    <property type="project" value="UniProtKB-KW"/>
</dbReference>
<dbReference type="GO" id="GO:0075523">
    <property type="term" value="P:viral translational frameshifting"/>
    <property type="evidence" value="ECO:0007669"/>
    <property type="project" value="UniProtKB-KW"/>
</dbReference>
<dbReference type="FunFam" id="1.10.185.10:FF:000001">
    <property type="entry name" value="Gag polyprotein"/>
    <property type="match status" value="1"/>
</dbReference>
<dbReference type="Gene3D" id="1.10.1200.30">
    <property type="match status" value="1"/>
</dbReference>
<dbReference type="Gene3D" id="2.40.70.10">
    <property type="entry name" value="Acid Proteases"/>
    <property type="match status" value="1"/>
</dbReference>
<dbReference type="Gene3D" id="1.10.185.10">
    <property type="entry name" value="Delta-retroviral matrix"/>
    <property type="match status" value="1"/>
</dbReference>
<dbReference type="Gene3D" id="1.10.375.10">
    <property type="entry name" value="Human Immunodeficiency Virus Type 1 Capsid Protein"/>
    <property type="match status" value="1"/>
</dbReference>
<dbReference type="Gene3D" id="4.10.60.10">
    <property type="entry name" value="Zinc finger, CCHC-type"/>
    <property type="match status" value="1"/>
</dbReference>
<dbReference type="InterPro" id="IPR001969">
    <property type="entry name" value="Aspartic_peptidase_AS"/>
</dbReference>
<dbReference type="InterPro" id="IPR003139">
    <property type="entry name" value="D_retro_matrix"/>
</dbReference>
<dbReference type="InterPro" id="IPR045345">
    <property type="entry name" value="Gag_p24_C"/>
</dbReference>
<dbReference type="InterPro" id="IPR001995">
    <property type="entry name" value="Peptidase_A2_cat"/>
</dbReference>
<dbReference type="InterPro" id="IPR021109">
    <property type="entry name" value="Peptidase_aspartic_dom_sf"/>
</dbReference>
<dbReference type="InterPro" id="IPR050195">
    <property type="entry name" value="Primate_lentivir_Gag_pol-like"/>
</dbReference>
<dbReference type="InterPro" id="IPR018061">
    <property type="entry name" value="Retropepsins"/>
</dbReference>
<dbReference type="InterPro" id="IPR008916">
    <property type="entry name" value="Retrov_capsid_C"/>
</dbReference>
<dbReference type="InterPro" id="IPR008919">
    <property type="entry name" value="Retrov_capsid_N"/>
</dbReference>
<dbReference type="InterPro" id="IPR010999">
    <property type="entry name" value="Retrovr_matrix"/>
</dbReference>
<dbReference type="InterPro" id="IPR001878">
    <property type="entry name" value="Znf_CCHC"/>
</dbReference>
<dbReference type="InterPro" id="IPR036875">
    <property type="entry name" value="Znf_CCHC_sf"/>
</dbReference>
<dbReference type="PANTHER" id="PTHR40389">
    <property type="entry name" value="ENDOGENOUS RETROVIRUS GROUP K MEMBER 24 GAG POLYPROTEIN-RELATED"/>
    <property type="match status" value="1"/>
</dbReference>
<dbReference type="PANTHER" id="PTHR40389:SF3">
    <property type="entry name" value="IGE-BINDING PROTEIN"/>
    <property type="match status" value="1"/>
</dbReference>
<dbReference type="Pfam" id="PF02228">
    <property type="entry name" value="Gag_p19"/>
    <property type="match status" value="1"/>
</dbReference>
<dbReference type="Pfam" id="PF00607">
    <property type="entry name" value="Gag_p24"/>
    <property type="match status" value="1"/>
</dbReference>
<dbReference type="Pfam" id="PF19317">
    <property type="entry name" value="Gag_p24_C"/>
    <property type="match status" value="1"/>
</dbReference>
<dbReference type="Pfam" id="PF00077">
    <property type="entry name" value="RVP"/>
    <property type="match status" value="1"/>
</dbReference>
<dbReference type="Pfam" id="PF00098">
    <property type="entry name" value="zf-CCHC"/>
    <property type="match status" value="1"/>
</dbReference>
<dbReference type="SMART" id="SM00343">
    <property type="entry name" value="ZnF_C2HC"/>
    <property type="match status" value="2"/>
</dbReference>
<dbReference type="SUPFAM" id="SSF50630">
    <property type="entry name" value="Acid proteases"/>
    <property type="match status" value="1"/>
</dbReference>
<dbReference type="SUPFAM" id="SSF47836">
    <property type="entry name" value="Retroviral matrix proteins"/>
    <property type="match status" value="1"/>
</dbReference>
<dbReference type="SUPFAM" id="SSF47353">
    <property type="entry name" value="Retrovirus capsid dimerization domain-like"/>
    <property type="match status" value="1"/>
</dbReference>
<dbReference type="SUPFAM" id="SSF47943">
    <property type="entry name" value="Retrovirus capsid protein, N-terminal core domain"/>
    <property type="match status" value="1"/>
</dbReference>
<dbReference type="SUPFAM" id="SSF57756">
    <property type="entry name" value="Retrovirus zinc finger-like domains"/>
    <property type="match status" value="1"/>
</dbReference>
<dbReference type="PROSITE" id="PS50175">
    <property type="entry name" value="ASP_PROT_RETROV"/>
    <property type="match status" value="1"/>
</dbReference>
<dbReference type="PROSITE" id="PS00141">
    <property type="entry name" value="ASP_PROTEASE"/>
    <property type="match status" value="1"/>
</dbReference>
<dbReference type="PROSITE" id="PS50158">
    <property type="entry name" value="ZF_CCHC"/>
    <property type="match status" value="1"/>
</dbReference>
<keyword id="KW-0002">3D-structure</keyword>
<keyword id="KW-0064">Aspartyl protease</keyword>
<keyword id="KW-0167">Capsid protein</keyword>
<keyword id="KW-0903">Direct protein sequencing</keyword>
<keyword id="KW-1262">Eukaryotic host gene expression shutoff by virus</keyword>
<keyword id="KW-1193">Eukaryotic host translation shutoff by virus</keyword>
<keyword id="KW-1190">Host gene expression shutoff by virus</keyword>
<keyword id="KW-0945">Host-virus interaction</keyword>
<keyword id="KW-0378">Hydrolase</keyword>
<keyword id="KW-0449">Lipoprotein</keyword>
<keyword id="KW-0479">Metal-binding</keyword>
<keyword id="KW-0519">Myristate</keyword>
<keyword id="KW-0597">Phosphoprotein</keyword>
<keyword id="KW-0645">Protease</keyword>
<keyword id="KW-1185">Reference proteome</keyword>
<keyword id="KW-0677">Repeat</keyword>
<keyword id="KW-0688">Ribosomal frameshifting</keyword>
<keyword id="KW-0543">Viral nucleoprotein</keyword>
<keyword id="KW-0946">Virion</keyword>
<keyword id="KW-0862">Zinc</keyword>
<keyword id="KW-0863">Zinc-finger</keyword>
<accession>P10274</accession>
<feature type="initiator methionine" description="Removed; by host" evidence="2">
    <location>
        <position position="1"/>
    </location>
</feature>
<feature type="chain" id="PRO_0000259788" description="Gag-Pro polyprotein">
    <location>
        <begin position="2"/>
        <end position="651"/>
    </location>
</feature>
<feature type="chain" id="PRO_0000259789" description="Matrix protein p19">
    <location>
        <begin position="2"/>
        <end position="130"/>
    </location>
</feature>
<feature type="chain" id="PRO_0000259790" description="Capsid protein p24">
    <location>
        <begin position="131"/>
        <end position="344"/>
    </location>
</feature>
<feature type="chain" id="PRO_0000259791" description="Nucleocapsid protein p15-pro">
    <location>
        <begin position="345"/>
        <end position="449"/>
    </location>
</feature>
<feature type="chain" id="PRO_0000259792" description="Protease">
    <location>
        <begin position="450"/>
        <end position="574"/>
    </location>
</feature>
<feature type="peptide" id="PRO_0000259793" description="p1">
    <location>
        <begin position="575"/>
        <end position="582"/>
    </location>
</feature>
<feature type="chain" id="PRO_0000259794" description="Transframe peptide">
    <location>
        <begin position="583"/>
        <end position="651"/>
    </location>
</feature>
<feature type="domain" description="Peptidase A2" evidence="4">
    <location>
        <begin position="476"/>
        <end position="554"/>
    </location>
</feature>
<feature type="zinc finger region" description="CCHC-type 1" evidence="3">
    <location>
        <begin position="355"/>
        <end position="372"/>
    </location>
</feature>
<feature type="zinc finger region" description="CCHC-type 2" evidence="3">
    <location>
        <begin position="378"/>
        <end position="395"/>
    </location>
</feature>
<feature type="region of interest" description="Disordered" evidence="5">
    <location>
        <begin position="93"/>
        <end position="144"/>
    </location>
</feature>
<feature type="short sequence motif" description="PPXY motif" evidence="1">
    <location>
        <begin position="118"/>
        <end position="121"/>
    </location>
</feature>
<feature type="short sequence motif" description="PTAP/PSAP motif" evidence="1">
    <location>
        <begin position="124"/>
        <end position="127"/>
    </location>
</feature>
<feature type="active site" description="For protease activity; shared with dimeric partner" evidence="4">
    <location>
        <position position="481"/>
    </location>
</feature>
<feature type="site" description="Cleavage; by viral protease" evidence="6">
    <location>
        <begin position="130"/>
        <end position="131"/>
    </location>
</feature>
<feature type="site" description="Cleavage; by viral protease" evidence="6">
    <location>
        <begin position="344"/>
        <end position="345"/>
    </location>
</feature>
<feature type="site" description="Cleavage; by viral protease" evidence="6">
    <location>
        <begin position="449"/>
        <end position="450"/>
    </location>
</feature>
<feature type="site" description="Cleavage; by viral protease" evidence="6 11">
    <location>
        <begin position="574"/>
        <end position="575"/>
    </location>
</feature>
<feature type="site" description="Cleavage; by viral protease" evidence="14">
    <location>
        <begin position="582"/>
        <end position="583"/>
    </location>
</feature>
<feature type="modified residue" description="Phosphoserine; by host MAPK1" evidence="1">
    <location>
        <position position="105"/>
    </location>
</feature>
<feature type="lipid moiety-binding region" description="N-myristoyl glycine; by host" evidence="2 7">
    <location>
        <position position="2"/>
    </location>
</feature>
<feature type="sequence variant">
    <original>LP</original>
    <variation>FL</variation>
    <location>
        <begin position="440"/>
        <end position="441"/>
    </location>
</feature>
<feature type="sequence variant">
    <original>R</original>
    <variation>G</variation>
    <location>
        <position position="569"/>
    </location>
</feature>
<feature type="sequence variant">
    <original>E</original>
    <variation>Q</variation>
    <location>
        <position position="592"/>
    </location>
</feature>
<feature type="sequence variant">
    <original>G</original>
    <variation>E</variation>
    <location>
        <position position="626"/>
    </location>
</feature>
<feature type="mutagenesis site" description="Complete loss of myristoylation the polyprotein. The concomitent loss of binding to the host cell membrane impairs the formation of viral particles." evidence="7">
    <original>G</original>
    <variation>A</variation>
    <location>
        <position position="2"/>
    </location>
</feature>
<feature type="mutagenesis site" description="Complete loss of protease activity." evidence="10">
    <original>M</original>
    <variation>A</variation>
    <variation>D</variation>
    <variation>N</variation>
    <location>
        <position position="486"/>
    </location>
</feature>
<feature type="mutagenesis site" description="Almost no effect on protease activity." evidence="10">
    <original>M</original>
    <variation>I</variation>
    <location>
        <position position="486"/>
    </location>
</feature>
<feature type="mutagenesis site" description="Decrease in protease activity." evidence="10">
    <original>M</original>
    <variation>V</variation>
    <location>
        <position position="486"/>
    </location>
</feature>
<feature type="mutagenesis site" description="Complete loss of protease activity." evidence="10">
    <original>L</original>
    <variation>G</variation>
    <location>
        <position position="506"/>
    </location>
</feature>
<feature type="mutagenesis site" description="Decrease in protease activity." evidence="10">
    <original>A</original>
    <variation>I</variation>
    <location>
        <position position="508"/>
    </location>
</feature>
<feature type="mutagenesis site" description="Complete loss of protease activity." evidence="10">
    <original>F</original>
    <variation>Q</variation>
    <location>
        <position position="516"/>
    </location>
</feature>
<feature type="mutagenesis site" description="Almost complete loss of protease activity." evidence="10">
    <original>N</original>
    <variation>T</variation>
    <location>
        <position position="545"/>
    </location>
</feature>
<feature type="mutagenesis site" description="Almost complete loss of protease activity." evidence="10">
    <original>N</original>
    <variation>P</variation>
    <location>
        <position position="546"/>
    </location>
</feature>
<feature type="mutagenesis site" description="Almost complete loss of protease activity." evidence="10">
    <original>W</original>
    <variation>V</variation>
    <location>
        <position position="547"/>
    </location>
</feature>
<feature type="mutagenesis site" description="Complete loss of cleavage between protease and p1." evidence="8">
    <original>ILP</original>
    <variation>TAG</variation>
    <location>
        <begin position="573"/>
        <end position="575"/>
    </location>
</feature>
<feature type="mutagenesis site" description="Complete loss of cleavage between p1 and the transframe peptide." evidence="8">
    <original>VLGL</original>
    <variation>GAGA</variation>
    <location>
        <begin position="581"/>
        <end position="584"/>
    </location>
</feature>
<feature type="sequence conflict" description="In Ref. 1." evidence="15" ref="1">
    <location>
        <position position="547"/>
    </location>
</feature>
<feature type="strand" evidence="16">
    <location>
        <begin position="451"/>
        <end position="453"/>
    </location>
</feature>
<feature type="strand" evidence="16">
    <location>
        <begin position="461"/>
        <end position="467"/>
    </location>
</feature>
<feature type="strand" evidence="16">
    <location>
        <begin position="469"/>
        <end position="471"/>
    </location>
</feature>
<feature type="strand" evidence="16">
    <location>
        <begin position="474"/>
        <end position="480"/>
    </location>
</feature>
<feature type="strand" evidence="16">
    <location>
        <begin position="488"/>
        <end position="490"/>
    </location>
</feature>
<feature type="helix" evidence="16">
    <location>
        <begin position="491"/>
        <end position="493"/>
    </location>
</feature>
<feature type="strand" evidence="16">
    <location>
        <begin position="500"/>
        <end position="502"/>
    </location>
</feature>
<feature type="strand" evidence="16">
    <location>
        <begin position="505"/>
        <end position="507"/>
    </location>
</feature>
<feature type="strand" evidence="16">
    <location>
        <begin position="510"/>
        <end position="521"/>
    </location>
</feature>
<feature type="strand" evidence="16">
    <location>
        <begin position="523"/>
        <end position="526"/>
    </location>
</feature>
<feature type="strand" evidence="16">
    <location>
        <begin position="534"/>
        <end position="537"/>
    </location>
</feature>
<feature type="strand" evidence="16">
    <location>
        <begin position="540"/>
        <end position="545"/>
    </location>
</feature>
<feature type="helix" evidence="16">
    <location>
        <begin position="552"/>
        <end position="557"/>
    </location>
</feature>
<feature type="strand" evidence="16">
    <location>
        <begin position="561"/>
        <end position="563"/>
    </location>
</feature>
<protein>
    <recommendedName>
        <fullName>Gag-Pro polyprotein</fullName>
    </recommendedName>
    <alternativeName>
        <fullName>Pr76Gag-Pro</fullName>
    </alternativeName>
    <component>
        <recommendedName>
            <fullName>Matrix protein p19</fullName>
            <shortName>MA</shortName>
        </recommendedName>
    </component>
    <component>
        <recommendedName>
            <fullName>Capsid protein p24</fullName>
            <shortName>CA</shortName>
        </recommendedName>
    </component>
    <component>
        <recommendedName>
            <fullName>Nucleocapsid protein p15-pro</fullName>
            <shortName>NC'</shortName>
            <shortName>NC-pro</shortName>
        </recommendedName>
    </component>
    <component>
        <recommendedName>
            <fullName>Protease</fullName>
            <shortName>PR</shortName>
            <ecNumber evidence="4 10">3.4.23.-</ecNumber>
        </recommendedName>
    </component>
    <component>
        <recommendedName>
            <fullName>p1</fullName>
        </recommendedName>
    </component>
    <component>
        <recommendedName>
            <fullName>Transframe peptide</fullName>
            <shortName>TFP</shortName>
        </recommendedName>
        <alternativeName>
            <fullName>p8</fullName>
        </alternativeName>
    </component>
</protein>
<evidence type="ECO:0000250" key="1">
    <source>
        <dbReference type="UniProtKB" id="P03345"/>
    </source>
</evidence>
<evidence type="ECO:0000255" key="2"/>
<evidence type="ECO:0000255" key="3">
    <source>
        <dbReference type="PROSITE-ProRule" id="PRU00047"/>
    </source>
</evidence>
<evidence type="ECO:0000255" key="4">
    <source>
        <dbReference type="PROSITE-ProRule" id="PRU00275"/>
    </source>
</evidence>
<evidence type="ECO:0000256" key="5">
    <source>
        <dbReference type="SAM" id="MobiDB-lite"/>
    </source>
</evidence>
<evidence type="ECO:0000269" key="6">
    <source>
    </source>
</evidence>
<evidence type="ECO:0000269" key="7">
    <source>
    </source>
</evidence>
<evidence type="ECO:0000269" key="8">
    <source>
    </source>
</evidence>
<evidence type="ECO:0000269" key="9">
    <source>
    </source>
</evidence>
<evidence type="ECO:0000269" key="10">
    <source>
    </source>
</evidence>
<evidence type="ECO:0000269" key="11">
    <source>
    </source>
</evidence>
<evidence type="ECO:0000269" key="12">
    <source>
    </source>
</evidence>
<evidence type="ECO:0000269" key="13">
    <source>
    </source>
</evidence>
<evidence type="ECO:0000303" key="14">
    <source>
    </source>
</evidence>
<evidence type="ECO:0000305" key="15"/>
<evidence type="ECO:0007829" key="16">
    <source>
        <dbReference type="PDB" id="6W6R"/>
    </source>
</evidence>
<name>PRO_HTL1A</name>
<comment type="function">
    <molecule>Gag-Pro polyprotein</molecule>
    <text evidence="1">The matrix domain targets Gag, Gag-Pro and Gag-Pro-Pol polyproteins to the plasma membrane via a multipartite membrane binding signal, that includes its myristoylated N-terminus.</text>
</comment>
<comment type="function">
    <molecule>Matrix protein p19</molecule>
    <text evidence="1">Matrix protein.</text>
</comment>
<comment type="function">
    <molecule>Capsid protein p24</molecule>
    <text evidence="15">Forms the spherical core of the virus that encapsulates the genomic RNA-nucleocapsid complex.</text>
</comment>
<comment type="function">
    <molecule>Nucleocapsid protein p15-pro</molecule>
    <text evidence="12">Binds strongly to viral nucleic acids and promote their aggregation. Also destabilizes the nucleic acids duplexes via highly structured zinc-binding motifs.</text>
</comment>
<comment type="function">
    <molecule>Protease</molecule>
    <text evidence="4 9 10">The aspartyl protease mediates proteolytic cleavages of Gag and Gag-Pol polyproteins during or shortly after the release of the virion from the plasma membrane. Cleavages take place as an ordered, step-wise cascade to yield mature proteins. This process is called maturation. Displays maximal activity during the budding process just prior to particle release from the cell. Cleaves the translation initiation factor eIF4G leading to the inhibition of host cap-dependent translation.</text>
</comment>
<comment type="subunit">
    <molecule>Gag-Pro polyprotein</molecule>
    <text evidence="1">Homodimer; the homodimers are part of the immature particles. Interacts with human TSG101 and NEDD4; these interactions are essential for budding and release of viral particles.</text>
</comment>
<comment type="subunit">
    <molecule>Matrix protein p19</molecule>
    <text evidence="1">Homodimer; further assembles as homohexamers.</text>
</comment>
<comment type="subcellular location">
    <molecule>Matrix protein p19</molecule>
    <subcellularLocation>
        <location evidence="1">Virion</location>
    </subcellularLocation>
</comment>
<comment type="subcellular location">
    <molecule>Capsid protein p24</molecule>
    <subcellularLocation>
        <location evidence="1">Virion</location>
    </subcellularLocation>
</comment>
<comment type="subcellular location">
    <molecule>Nucleocapsid protein p15-pro</molecule>
    <subcellularLocation>
        <location evidence="1">Virion</location>
    </subcellularLocation>
</comment>
<comment type="alternative products">
    <event type="ribosomal frameshifting"/>
    <isoform>
        <id>P10274-1</id>
        <name>Gag-Pro polyprotein</name>
        <sequence type="displayed"/>
    </isoform>
    <isoform>
        <id>P03345-1</id>
        <name>Gag polyprotein</name>
        <sequence type="external"/>
    </isoform>
    <isoform>
        <id>P03362-1</id>
        <name>Gag-Pro-Pol polyprotein</name>
        <sequence type="external"/>
    </isoform>
    <text evidence="15">This strategy of translation probably allows the virus to modulate the quantity of each viral protein.</text>
</comment>
<comment type="domain">
    <molecule>Capsid protein p24</molecule>
    <text evidence="7">The capsid protein N-terminus seems to be involved in Gag-Gag interactions.</text>
</comment>
<comment type="domain">
    <molecule>Gag-Pro polyprotein</molecule>
    <text evidence="1">Late-budding domains (L domains) are short sequence motifs essential for viral particle release. They can occur individually or in close proximity within structural proteins. They interacts with sorting cellular proteins of the multivesicular body (MVB) pathway. Most of these proteins are class E vacuolar protein sorting factors belonging to ESCRT-I, ESCRT-II or ESCRT-III complexes. Matrix protein p19 contains two L domains: a PTAP/PSAP motif which interacts with the UEV domain of TSG101, and a PPXY motif which binds to the WW domains of the ubiquitin ligase NEDD4.</text>
</comment>
<comment type="PTM">
    <molecule>Gag-Pro polyprotein</molecule>
    <text evidence="6 8 10 11">Specific enzymatic cleavages by the viral protease yield mature proteins. The polyprotein is cleaved during and after budding, this process is termed maturation. The protease is autoproteolytically processed at its N- and C-termini.</text>
</comment>
<comment type="PTM">
    <molecule>Matrix protein p19</molecule>
    <text evidence="1">Phosphorylation of the matrix protein p19 by MAPK1 seems to play a role in budding.</text>
</comment>
<comment type="PTM">
    <molecule>Gag-Pro polyprotein</molecule>
    <text evidence="1 7">Myristoylated (PubMed:11333909). Myristoylation of the matrix (MA) domain mediates the transport and binding of Gag polyproteins to the host plasma membrane and is required for the assembly of viral particles (By similarity).</text>
</comment>
<comment type="miscellaneous">
    <text evidence="15">HTLV-1 lineages are divided in four clades, A (Cosmopolitan), B (Central African group), C (Melanesian group) and D (New Central African group).</text>
</comment>
<comment type="miscellaneous">
    <molecule>Isoform Gag-Pro polyprotein</molecule>
    <text evidence="13">Produced by -1 ribosomal frameshifting at the gag-pro genes boundary.</text>
</comment>
<proteinExistence type="evidence at protein level"/>